<dbReference type="PIR" id="S01652">
    <property type="entry name" value="S01652"/>
</dbReference>
<dbReference type="BMRB" id="P15527"/>
<dbReference type="GO" id="GO:0033105">
    <property type="term" value="C:chlorosome envelope"/>
    <property type="evidence" value="ECO:0007669"/>
    <property type="project" value="UniProtKB-SubCell"/>
</dbReference>
<dbReference type="GO" id="GO:0042314">
    <property type="term" value="F:bacteriochlorophyll binding"/>
    <property type="evidence" value="ECO:0007669"/>
    <property type="project" value="UniProtKB-KW"/>
</dbReference>
<dbReference type="GO" id="GO:0046872">
    <property type="term" value="F:metal ion binding"/>
    <property type="evidence" value="ECO:0007669"/>
    <property type="project" value="UniProtKB-KW"/>
</dbReference>
<dbReference type="GO" id="GO:0015979">
    <property type="term" value="P:photosynthesis"/>
    <property type="evidence" value="ECO:0007669"/>
    <property type="project" value="UniProtKB-KW"/>
</dbReference>
<dbReference type="Gene3D" id="1.20.5.950">
    <property type="entry name" value="bacteriochlorophyll c-binding protein"/>
    <property type="match status" value="1"/>
</dbReference>
<dbReference type="InterPro" id="IPR001470">
    <property type="entry name" value="Bchl_c-bd"/>
</dbReference>
<dbReference type="InterPro" id="IPR038387">
    <property type="entry name" value="Bchl_C-bd_sf"/>
</dbReference>
<dbReference type="Pfam" id="PF02043">
    <property type="entry name" value="Bac_chlorC"/>
    <property type="match status" value="1"/>
</dbReference>
<dbReference type="PIRSF" id="PIRSF002903">
    <property type="entry name" value="Bac_chlorC_bd"/>
    <property type="match status" value="1"/>
</dbReference>
<dbReference type="PRINTS" id="PR00656">
    <property type="entry name" value="BCHLROPHYLLC"/>
</dbReference>
<evidence type="ECO:0000255" key="1"/>
<evidence type="ECO:0000305" key="2"/>
<evidence type="ECO:0000305" key="3">
    <source ref="1"/>
</evidence>
<gene>
    <name type="primary">csmA</name>
</gene>
<protein>
    <recommendedName>
        <fullName>Bacteriochlorophyll c-binding protein</fullName>
        <shortName>BChl c-binding</shortName>
    </recommendedName>
    <alternativeName>
        <fullName>Chlorosome protein A</fullName>
    </alternativeName>
</protein>
<feature type="chain" id="PRO_0000219552" description="Bacteriochlorophyll c-binding protein">
    <location>
        <begin position="1"/>
        <end position="60"/>
    </location>
</feature>
<feature type="binding site" description="axial binding residue" evidence="1">
    <location>
        <position position="25"/>
    </location>
    <ligand>
        <name>a bacteriochlorophyll c</name>
        <dbReference type="ChEBI" id="CHEBI:60197"/>
    </ligand>
    <ligandPart>
        <name>Mg</name>
        <dbReference type="ChEBI" id="CHEBI:25107"/>
    </ligandPart>
</feature>
<feature type="modified residue" description="N-formylmethionine" evidence="3">
    <location>
        <position position="1"/>
    </location>
</feature>
<comment type="function">
    <text>Component of the photosynthetic apparatus. The light harvesting B740 complex binds bacteriochlorophyll c.</text>
</comment>
<comment type="subcellular location">
    <subcellularLocation>
        <location>Chlorosome</location>
        <location>Chlorosome envelope</location>
    </subcellularLocation>
</comment>
<comment type="similarity">
    <text evidence="2">Belongs to the BChl C/E-binding protein family.</text>
</comment>
<proteinExistence type="evidence at protein level"/>
<name>CSMA_PELLU</name>
<sequence>MSGGGVFTDILAAAGRIFEVMVEGHWETVGMLFDSLGKGTMRINRNAYGSMGGGTSLRGS</sequence>
<reference key="1">
    <citation type="journal article" date="1988" name="FEBS Lett.">
        <title>The BChlc/e-binding polypeptides from chlorosomes of green photosynthetic bacteria.</title>
        <authorList>
            <person name="Wagner-Huber R."/>
            <person name="Brunisholz R."/>
            <person name="Frank G."/>
            <person name="Zuber H."/>
        </authorList>
    </citation>
    <scope>PROTEIN SEQUENCE</scope>
    <scope>FORMYLATION AT MET-1</scope>
    <source>
        <strain>2530</strain>
    </source>
</reference>
<keyword id="KW-0076">Bacteriochlorophyll</keyword>
<keyword id="KW-0148">Chlorophyll</keyword>
<keyword id="KW-0151">Chlorosome</keyword>
<keyword id="KW-0157">Chromophore</keyword>
<keyword id="KW-0903">Direct protein sequencing</keyword>
<keyword id="KW-0249">Electron transport</keyword>
<keyword id="KW-0291">Formylation</keyword>
<keyword id="KW-0460">Magnesium</keyword>
<keyword id="KW-0479">Metal-binding</keyword>
<keyword id="KW-0602">Photosynthesis</keyword>
<keyword id="KW-0813">Transport</keyword>
<accession>P15527</accession>
<organism>
    <name type="scientific">Pelodictyon luteolum</name>
    <dbReference type="NCBI Taxonomy" id="1100"/>
    <lineage>
        <taxon>Bacteria</taxon>
        <taxon>Pseudomonadati</taxon>
        <taxon>Chlorobiota</taxon>
        <taxon>Chlorobiia</taxon>
        <taxon>Chlorobiales</taxon>
        <taxon>Chlorobiaceae</taxon>
        <taxon>Chlorobium/Pelodictyon group</taxon>
        <taxon>Pelodictyon</taxon>
    </lineage>
</organism>